<comment type="function">
    <text evidence="1">Catalyzes the condensation of ATP and 5-phosphoribose 1-diphosphate to form N'-(5'-phosphoribosyl)-ATP (PR-ATP). Has a crucial role in the pathway because the rate of histidine biosynthesis seems to be controlled primarily by regulation of HisG enzymatic activity.</text>
</comment>
<comment type="catalytic activity">
    <reaction evidence="1">
        <text>1-(5-phospho-beta-D-ribosyl)-ATP + diphosphate = 5-phospho-alpha-D-ribose 1-diphosphate + ATP</text>
        <dbReference type="Rhea" id="RHEA:18473"/>
        <dbReference type="ChEBI" id="CHEBI:30616"/>
        <dbReference type="ChEBI" id="CHEBI:33019"/>
        <dbReference type="ChEBI" id="CHEBI:58017"/>
        <dbReference type="ChEBI" id="CHEBI:73183"/>
        <dbReference type="EC" id="2.4.2.17"/>
    </reaction>
</comment>
<comment type="cofactor">
    <cofactor evidence="1">
        <name>Mg(2+)</name>
        <dbReference type="ChEBI" id="CHEBI:18420"/>
    </cofactor>
</comment>
<comment type="activity regulation">
    <text evidence="1">Feedback inhibited by histidine.</text>
</comment>
<comment type="pathway">
    <text evidence="1">Amino-acid biosynthesis; L-histidine biosynthesis; L-histidine from 5-phospho-alpha-D-ribose 1-diphosphate: step 1/9.</text>
</comment>
<comment type="subcellular location">
    <subcellularLocation>
        <location evidence="1">Cytoplasm</location>
    </subcellularLocation>
</comment>
<comment type="similarity">
    <text evidence="1">Belongs to the ATP phosphoribosyltransferase family. Long subfamily.</text>
</comment>
<dbReference type="EC" id="2.4.2.17" evidence="1"/>
<dbReference type="EMBL" id="AE014295">
    <property type="protein sequence ID" value="AAN24568.1"/>
    <property type="molecule type" value="Genomic_DNA"/>
</dbReference>
<dbReference type="RefSeq" id="NP_695932.1">
    <property type="nucleotide sequence ID" value="NC_004307.2"/>
</dbReference>
<dbReference type="RefSeq" id="WP_007055763.1">
    <property type="nucleotide sequence ID" value="NC_004307.2"/>
</dbReference>
<dbReference type="SMR" id="Q8G695"/>
<dbReference type="STRING" id="206672.BL0751"/>
<dbReference type="EnsemblBacteria" id="AAN24568">
    <property type="protein sequence ID" value="AAN24568"/>
    <property type="gene ID" value="BL0751"/>
</dbReference>
<dbReference type="KEGG" id="blo:BL0751"/>
<dbReference type="PATRIC" id="fig|206672.9.peg.450"/>
<dbReference type="HOGENOM" id="CLU_038115_1_1_11"/>
<dbReference type="OrthoDB" id="9801867at2"/>
<dbReference type="PhylomeDB" id="Q8G695"/>
<dbReference type="UniPathway" id="UPA00031">
    <property type="reaction ID" value="UER00006"/>
</dbReference>
<dbReference type="Proteomes" id="UP000000439">
    <property type="component" value="Chromosome"/>
</dbReference>
<dbReference type="GO" id="GO:0005737">
    <property type="term" value="C:cytoplasm"/>
    <property type="evidence" value="ECO:0007669"/>
    <property type="project" value="UniProtKB-SubCell"/>
</dbReference>
<dbReference type="GO" id="GO:0005524">
    <property type="term" value="F:ATP binding"/>
    <property type="evidence" value="ECO:0007669"/>
    <property type="project" value="UniProtKB-KW"/>
</dbReference>
<dbReference type="GO" id="GO:0003879">
    <property type="term" value="F:ATP phosphoribosyltransferase activity"/>
    <property type="evidence" value="ECO:0007669"/>
    <property type="project" value="UniProtKB-UniRule"/>
</dbReference>
<dbReference type="GO" id="GO:0000287">
    <property type="term" value="F:magnesium ion binding"/>
    <property type="evidence" value="ECO:0007669"/>
    <property type="project" value="UniProtKB-UniRule"/>
</dbReference>
<dbReference type="GO" id="GO:0000105">
    <property type="term" value="P:L-histidine biosynthetic process"/>
    <property type="evidence" value="ECO:0007669"/>
    <property type="project" value="UniProtKB-UniRule"/>
</dbReference>
<dbReference type="Gene3D" id="3.30.70.120">
    <property type="match status" value="1"/>
</dbReference>
<dbReference type="Gene3D" id="3.40.190.10">
    <property type="entry name" value="Periplasmic binding protein-like II"/>
    <property type="match status" value="2"/>
</dbReference>
<dbReference type="HAMAP" id="MF_00079">
    <property type="entry name" value="HisG_Long"/>
    <property type="match status" value="1"/>
</dbReference>
<dbReference type="InterPro" id="IPR020621">
    <property type="entry name" value="ATP-PRT_HisG_long"/>
</dbReference>
<dbReference type="InterPro" id="IPR013820">
    <property type="entry name" value="ATP_PRibTrfase_cat"/>
</dbReference>
<dbReference type="InterPro" id="IPR018198">
    <property type="entry name" value="ATP_PRibTrfase_CS"/>
</dbReference>
<dbReference type="InterPro" id="IPR001348">
    <property type="entry name" value="ATP_PRibTrfase_HisG"/>
</dbReference>
<dbReference type="InterPro" id="IPR013115">
    <property type="entry name" value="HisG_C"/>
</dbReference>
<dbReference type="InterPro" id="IPR011322">
    <property type="entry name" value="N-reg_PII-like_a/b"/>
</dbReference>
<dbReference type="InterPro" id="IPR015867">
    <property type="entry name" value="N-reg_PII/ATP_PRibTrfase_C"/>
</dbReference>
<dbReference type="NCBIfam" id="TIGR00070">
    <property type="entry name" value="hisG"/>
    <property type="match status" value="1"/>
</dbReference>
<dbReference type="NCBIfam" id="TIGR03455">
    <property type="entry name" value="HisG_C-term"/>
    <property type="match status" value="1"/>
</dbReference>
<dbReference type="PANTHER" id="PTHR21403:SF8">
    <property type="entry name" value="ATP PHOSPHORIBOSYLTRANSFERASE"/>
    <property type="match status" value="1"/>
</dbReference>
<dbReference type="PANTHER" id="PTHR21403">
    <property type="entry name" value="ATP PHOSPHORIBOSYLTRANSFERASE ATP-PRTASE"/>
    <property type="match status" value="1"/>
</dbReference>
<dbReference type="Pfam" id="PF01634">
    <property type="entry name" value="HisG"/>
    <property type="match status" value="1"/>
</dbReference>
<dbReference type="Pfam" id="PF08029">
    <property type="entry name" value="HisG_C"/>
    <property type="match status" value="1"/>
</dbReference>
<dbReference type="SUPFAM" id="SSF54913">
    <property type="entry name" value="GlnB-like"/>
    <property type="match status" value="1"/>
</dbReference>
<dbReference type="SUPFAM" id="SSF53850">
    <property type="entry name" value="Periplasmic binding protein-like II"/>
    <property type="match status" value="1"/>
</dbReference>
<dbReference type="PROSITE" id="PS01316">
    <property type="entry name" value="ATP_P_PHORIBOSYLTR"/>
    <property type="match status" value="1"/>
</dbReference>
<gene>
    <name evidence="1" type="primary">hisG</name>
    <name type="ordered locus">BL0751</name>
</gene>
<protein>
    <recommendedName>
        <fullName evidence="1">ATP phosphoribosyltransferase</fullName>
        <shortName evidence="1">ATP-PRT</shortName>
        <shortName evidence="1">ATP-PRTase</shortName>
        <ecNumber evidence="1">2.4.2.17</ecNumber>
    </recommendedName>
</protein>
<evidence type="ECO:0000255" key="1">
    <source>
        <dbReference type="HAMAP-Rule" id="MF_00079"/>
    </source>
</evidence>
<proteinExistence type="inferred from homology"/>
<name>HIS1_BIFLO</name>
<feature type="chain" id="PRO_0000151831" description="ATP phosphoribosyltransferase">
    <location>
        <begin position="1"/>
        <end position="283"/>
    </location>
</feature>
<organism>
    <name type="scientific">Bifidobacterium longum (strain NCC 2705)</name>
    <dbReference type="NCBI Taxonomy" id="206672"/>
    <lineage>
        <taxon>Bacteria</taxon>
        <taxon>Bacillati</taxon>
        <taxon>Actinomycetota</taxon>
        <taxon>Actinomycetes</taxon>
        <taxon>Bifidobacteriales</taxon>
        <taxon>Bifidobacteriaceae</taxon>
        <taxon>Bifidobacterium</taxon>
    </lineage>
</organism>
<keyword id="KW-0028">Amino-acid biosynthesis</keyword>
<keyword id="KW-0067">ATP-binding</keyword>
<keyword id="KW-0963">Cytoplasm</keyword>
<keyword id="KW-0328">Glycosyltransferase</keyword>
<keyword id="KW-0368">Histidine biosynthesis</keyword>
<keyword id="KW-0460">Magnesium</keyword>
<keyword id="KW-0479">Metal-binding</keyword>
<keyword id="KW-0547">Nucleotide-binding</keyword>
<keyword id="KW-1185">Reference proteome</keyword>
<keyword id="KW-0808">Transferase</keyword>
<reference key="1">
    <citation type="journal article" date="2002" name="Proc. Natl. Acad. Sci. U.S.A.">
        <title>The genome sequence of Bifidobacterium longum reflects its adaptation to the human gastrointestinal tract.</title>
        <authorList>
            <person name="Schell M.A."/>
            <person name="Karmirantzou M."/>
            <person name="Snel B."/>
            <person name="Vilanova D."/>
            <person name="Berger B."/>
            <person name="Pessi G."/>
            <person name="Zwahlen M.-C."/>
            <person name="Desiere F."/>
            <person name="Bork P."/>
            <person name="Delley M."/>
            <person name="Pridmore R.D."/>
            <person name="Arigoni F."/>
        </authorList>
    </citation>
    <scope>NUCLEOTIDE SEQUENCE [LARGE SCALE GENOMIC DNA]</scope>
    <source>
        <strain>NCC 2705</strain>
    </source>
</reference>
<accession>Q8G695</accession>
<sequence length="283" mass="30893">MLRIAVPNKGMLSEPAWNMLAEAGYRLRTNPRQLVVQDPDNGIELFYLRPLDIAVYVGRGAIDVGITGQDLLKNSGTAALEHMPLGFGTSTFRFAAPNESPITTLEDIQGKRVATTFDKLVHDYLVEHGIQAETIHLDGAVESSVQLGVADLIADVVSTGTTLRNAGLRVFAEPLMHSEACLIRSPRLNEQDSRLAVLTRRLQGVLTAHQYVLMDYDIPISKVAAAVAVTPGFESPTISPLHDKQWNAVRVMVPKAKVNQLMDDLYEVGARGIIVTALQASRM</sequence>